<sequence length="36" mass="4391">GPSQPTYPGNDAPVEDLRFYYDNLQQYRLNVFRHRY</sequence>
<evidence type="ECO:0000250" key="1"/>
<evidence type="ECO:0000250" key="2">
    <source>
        <dbReference type="UniProtKB" id="P01298"/>
    </source>
</evidence>
<evidence type="ECO:0000303" key="3">
    <source>
    </source>
</evidence>
<evidence type="ECO:0000305" key="4"/>
<dbReference type="PIR" id="A01576">
    <property type="entry name" value="PCGS"/>
</dbReference>
<dbReference type="SMR" id="P06304"/>
<dbReference type="GO" id="GO:0005576">
    <property type="term" value="C:extracellular region"/>
    <property type="evidence" value="ECO:0007669"/>
    <property type="project" value="UniProtKB-SubCell"/>
</dbReference>
<dbReference type="GO" id="GO:0005179">
    <property type="term" value="F:hormone activity"/>
    <property type="evidence" value="ECO:0007669"/>
    <property type="project" value="UniProtKB-KW"/>
</dbReference>
<dbReference type="Gene3D" id="6.10.250.900">
    <property type="match status" value="1"/>
</dbReference>
<dbReference type="InterPro" id="IPR001955">
    <property type="entry name" value="Pancreatic_hormone-like"/>
</dbReference>
<dbReference type="InterPro" id="IPR020392">
    <property type="entry name" value="Pancreatic_hormone-like_CS"/>
</dbReference>
<dbReference type="PRINTS" id="PR00278">
    <property type="entry name" value="PANCHORMONE"/>
</dbReference>
<dbReference type="SMART" id="SM00309">
    <property type="entry name" value="PAH"/>
    <property type="match status" value="1"/>
</dbReference>
<dbReference type="PROSITE" id="PS00265">
    <property type="entry name" value="PANCREATIC_HORMONE_1"/>
    <property type="match status" value="1"/>
</dbReference>
<dbReference type="PROSITE" id="PS50276">
    <property type="entry name" value="PANCREATIC_HORMONE_2"/>
    <property type="match status" value="1"/>
</dbReference>
<feature type="peptide" id="PRO_0000044803" description="Pancreatic polypeptide">
    <location>
        <begin position="1"/>
        <end position="36"/>
    </location>
</feature>
<feature type="modified residue" description="Tyrosine amide" evidence="1">
    <location>
        <position position="36"/>
    </location>
</feature>
<feature type="sequence variant">
    <original>N</original>
    <variation>V</variation>
    <location>
        <position position="30"/>
    </location>
</feature>
<keyword id="KW-0027">Amidation</keyword>
<keyword id="KW-0903">Direct protein sequencing</keyword>
<keyword id="KW-0372">Hormone</keyword>
<keyword id="KW-0964">Secreted</keyword>
<proteinExistence type="evidence at protein level"/>
<accession>P06304</accession>
<reference key="1">
    <citation type="journal article" date="1984" name="Sci. Sin., Ser. B Chem. Biol. Agric. Med. Earth Sci.">
        <title>Isolation and sequence determination of goose pancreatic polypeptide.</title>
        <authorList>
            <person name="Xu Y."/>
            <person name="Lin N."/>
            <person name="Zhang Y.S."/>
        </authorList>
    </citation>
    <scope>PROTEIN SEQUENCE</scope>
</reference>
<reference key="2">
    <citation type="journal article" date="1984" name="Eur. J. Biochem.">
        <title>Conformational studies on the pancreatic polypeptide hormone family.</title>
        <authorList>
            <person name="Glover I.D."/>
            <person name="Barlow D.J."/>
            <person name="Pitts J.E."/>
            <person name="Wood S.P."/>
            <person name="Tickle I.J."/>
            <person name="Blundell T.L."/>
            <person name="Tatemoto K."/>
            <person name="Kimmel J.R."/>
            <person name="Wollmer A."/>
            <person name="Strassburger W."/>
            <person name="Zhang Y.S."/>
        </authorList>
    </citation>
    <scope>PROTEIN SEQUENCE</scope>
</reference>
<organism>
    <name type="scientific">Anser anser anser</name>
    <name type="common">Western greylag goose</name>
    <dbReference type="NCBI Taxonomy" id="8844"/>
    <lineage>
        <taxon>Eukaryota</taxon>
        <taxon>Metazoa</taxon>
        <taxon>Chordata</taxon>
        <taxon>Craniata</taxon>
        <taxon>Vertebrata</taxon>
        <taxon>Euteleostomi</taxon>
        <taxon>Archelosauria</taxon>
        <taxon>Archosauria</taxon>
        <taxon>Dinosauria</taxon>
        <taxon>Saurischia</taxon>
        <taxon>Theropoda</taxon>
        <taxon>Coelurosauria</taxon>
        <taxon>Aves</taxon>
        <taxon>Neognathae</taxon>
        <taxon>Galloanserae</taxon>
        <taxon>Anseriformes</taxon>
        <taxon>Anatidae</taxon>
        <taxon>Anserinae</taxon>
        <taxon>Anser</taxon>
    </lineage>
</organism>
<gene>
    <name type="primary">PPY</name>
</gene>
<comment type="function">
    <text evidence="2">Hormone secreted by pancreatic cells that acts as a regulator of pancreatic and gastrointestinal functions.</text>
</comment>
<comment type="subcellular location">
    <subcellularLocation>
        <location evidence="2">Secreted</location>
    </subcellularLocation>
</comment>
<comment type="similarity">
    <text evidence="4">Belongs to the NPY family.</text>
</comment>
<protein>
    <recommendedName>
        <fullName evidence="3">Pancreatic polypeptide</fullName>
        <shortName evidence="3">PP</shortName>
    </recommendedName>
</protein>
<name>PAHO_ANSAN</name>